<protein>
    <recommendedName>
        <fullName evidence="1">Large ribosomal subunit protein bL36</fullName>
    </recommendedName>
    <alternativeName>
        <fullName evidence="2">50S ribosomal protein L36</fullName>
    </alternativeName>
</protein>
<gene>
    <name evidence="1" type="primary">rpmJ</name>
    <name type="ordered locus">SNSL254_A0520</name>
</gene>
<evidence type="ECO:0000255" key="1">
    <source>
        <dbReference type="HAMAP-Rule" id="MF_00251"/>
    </source>
</evidence>
<evidence type="ECO:0000305" key="2"/>
<reference key="1">
    <citation type="journal article" date="2011" name="J. Bacteriol.">
        <title>Comparative genomics of 28 Salmonella enterica isolates: evidence for CRISPR-mediated adaptive sublineage evolution.</title>
        <authorList>
            <person name="Fricke W.F."/>
            <person name="Mammel M.K."/>
            <person name="McDermott P.F."/>
            <person name="Tartera C."/>
            <person name="White D.G."/>
            <person name="Leclerc J.E."/>
            <person name="Ravel J."/>
            <person name="Cebula T.A."/>
        </authorList>
    </citation>
    <scope>NUCLEOTIDE SEQUENCE [LARGE SCALE GENOMIC DNA]</scope>
    <source>
        <strain>SL254</strain>
    </source>
</reference>
<name>RL36_SALNS</name>
<proteinExistence type="inferred from homology"/>
<comment type="similarity">
    <text evidence="1">Belongs to the bacterial ribosomal protein bL36 family.</text>
</comment>
<feature type="chain" id="PRO_1000101068" description="Large ribosomal subunit protein bL36">
    <location>
        <begin position="1"/>
        <end position="46"/>
    </location>
</feature>
<sequence length="46" mass="5521">MQVLNSLRNAKQRHPDCQIVKRKGRLYVICKTNPRFKAVQGRKKRR</sequence>
<dbReference type="EMBL" id="CP001113">
    <property type="protein sequence ID" value="ACF65302.1"/>
    <property type="molecule type" value="Genomic_DNA"/>
</dbReference>
<dbReference type="SMR" id="B4SWW3"/>
<dbReference type="KEGG" id="see:SNSL254_A0520"/>
<dbReference type="HOGENOM" id="CLU_135723_3_1_6"/>
<dbReference type="Proteomes" id="UP000008824">
    <property type="component" value="Chromosome"/>
</dbReference>
<dbReference type="GO" id="GO:1990904">
    <property type="term" value="C:ribonucleoprotein complex"/>
    <property type="evidence" value="ECO:0007669"/>
    <property type="project" value="UniProtKB-KW"/>
</dbReference>
<dbReference type="GO" id="GO:0005840">
    <property type="term" value="C:ribosome"/>
    <property type="evidence" value="ECO:0007669"/>
    <property type="project" value="UniProtKB-KW"/>
</dbReference>
<dbReference type="GO" id="GO:0003735">
    <property type="term" value="F:structural constituent of ribosome"/>
    <property type="evidence" value="ECO:0007669"/>
    <property type="project" value="InterPro"/>
</dbReference>
<dbReference type="GO" id="GO:0006412">
    <property type="term" value="P:translation"/>
    <property type="evidence" value="ECO:0007669"/>
    <property type="project" value="UniProtKB-UniRule"/>
</dbReference>
<dbReference type="HAMAP" id="MF_00251">
    <property type="entry name" value="Ribosomal_bL36"/>
    <property type="match status" value="1"/>
</dbReference>
<dbReference type="InterPro" id="IPR000473">
    <property type="entry name" value="Ribosomal_bL36"/>
</dbReference>
<dbReference type="InterPro" id="IPR035977">
    <property type="entry name" value="Ribosomal_bL36_sp"/>
</dbReference>
<dbReference type="InterPro" id="IPR047621">
    <property type="entry name" value="Ribosomal_L36_bact"/>
</dbReference>
<dbReference type="NCBIfam" id="NF002021">
    <property type="entry name" value="PRK00831.1"/>
    <property type="match status" value="1"/>
</dbReference>
<dbReference type="NCBIfam" id="TIGR01022">
    <property type="entry name" value="rpmJ_bact"/>
    <property type="match status" value="1"/>
</dbReference>
<dbReference type="PANTHER" id="PTHR47781">
    <property type="entry name" value="50S RIBOSOMAL PROTEIN L36 2"/>
    <property type="match status" value="1"/>
</dbReference>
<dbReference type="PANTHER" id="PTHR47781:SF1">
    <property type="entry name" value="LARGE RIBOSOMAL SUBUNIT PROTEIN BL36B"/>
    <property type="match status" value="1"/>
</dbReference>
<dbReference type="Pfam" id="PF00444">
    <property type="entry name" value="Ribosomal_L36"/>
    <property type="match status" value="1"/>
</dbReference>
<dbReference type="SUPFAM" id="SSF57840">
    <property type="entry name" value="Ribosomal protein L36"/>
    <property type="match status" value="1"/>
</dbReference>
<dbReference type="PROSITE" id="PS00828">
    <property type="entry name" value="RIBOSOMAL_L36"/>
    <property type="match status" value="1"/>
</dbReference>
<keyword id="KW-0687">Ribonucleoprotein</keyword>
<keyword id="KW-0689">Ribosomal protein</keyword>
<accession>B4SWW3</accession>
<organism>
    <name type="scientific">Salmonella newport (strain SL254)</name>
    <dbReference type="NCBI Taxonomy" id="423368"/>
    <lineage>
        <taxon>Bacteria</taxon>
        <taxon>Pseudomonadati</taxon>
        <taxon>Pseudomonadota</taxon>
        <taxon>Gammaproteobacteria</taxon>
        <taxon>Enterobacterales</taxon>
        <taxon>Enterobacteriaceae</taxon>
        <taxon>Salmonella</taxon>
    </lineage>
</organism>